<reference key="1">
    <citation type="journal article" date="2002" name="Nature">
        <title>The genome sequence and structure of rice chromosome 1.</title>
        <authorList>
            <person name="Sasaki T."/>
            <person name="Matsumoto T."/>
            <person name="Yamamoto K."/>
            <person name="Sakata K."/>
            <person name="Baba T."/>
            <person name="Katayose Y."/>
            <person name="Wu J."/>
            <person name="Niimura Y."/>
            <person name="Cheng Z."/>
            <person name="Nagamura Y."/>
            <person name="Antonio B.A."/>
            <person name="Kanamori H."/>
            <person name="Hosokawa S."/>
            <person name="Masukawa M."/>
            <person name="Arikawa K."/>
            <person name="Chiden Y."/>
            <person name="Hayashi M."/>
            <person name="Okamoto M."/>
            <person name="Ando T."/>
            <person name="Aoki H."/>
            <person name="Arita K."/>
            <person name="Hamada M."/>
            <person name="Harada C."/>
            <person name="Hijishita S."/>
            <person name="Honda M."/>
            <person name="Ichikawa Y."/>
            <person name="Idonuma A."/>
            <person name="Iijima M."/>
            <person name="Ikeda M."/>
            <person name="Ikeno M."/>
            <person name="Ito S."/>
            <person name="Ito T."/>
            <person name="Ito Y."/>
            <person name="Ito Y."/>
            <person name="Iwabuchi A."/>
            <person name="Kamiya K."/>
            <person name="Karasawa W."/>
            <person name="Katagiri S."/>
            <person name="Kikuta A."/>
            <person name="Kobayashi N."/>
            <person name="Kono I."/>
            <person name="Machita K."/>
            <person name="Maehara T."/>
            <person name="Mizuno H."/>
            <person name="Mizubayashi T."/>
            <person name="Mukai Y."/>
            <person name="Nagasaki H."/>
            <person name="Nakashima M."/>
            <person name="Nakama Y."/>
            <person name="Nakamichi Y."/>
            <person name="Nakamura M."/>
            <person name="Namiki N."/>
            <person name="Negishi M."/>
            <person name="Ohta I."/>
            <person name="Ono N."/>
            <person name="Saji S."/>
            <person name="Sakai K."/>
            <person name="Shibata M."/>
            <person name="Shimokawa T."/>
            <person name="Shomura A."/>
            <person name="Song J."/>
            <person name="Takazaki Y."/>
            <person name="Terasawa K."/>
            <person name="Tsuji K."/>
            <person name="Waki K."/>
            <person name="Yamagata H."/>
            <person name="Yamane H."/>
            <person name="Yoshiki S."/>
            <person name="Yoshihara R."/>
            <person name="Yukawa K."/>
            <person name="Zhong H."/>
            <person name="Iwama H."/>
            <person name="Endo T."/>
            <person name="Ito H."/>
            <person name="Hahn J.H."/>
            <person name="Kim H.-I."/>
            <person name="Eun M.-Y."/>
            <person name="Yano M."/>
            <person name="Jiang J."/>
            <person name="Gojobori T."/>
        </authorList>
    </citation>
    <scope>NUCLEOTIDE SEQUENCE [LARGE SCALE GENOMIC DNA]</scope>
    <source>
        <strain>cv. Nipponbare</strain>
    </source>
</reference>
<reference key="2">
    <citation type="journal article" date="2005" name="Nature">
        <title>The map-based sequence of the rice genome.</title>
        <authorList>
            <consortium name="International rice genome sequencing project (IRGSP)"/>
        </authorList>
    </citation>
    <scope>NUCLEOTIDE SEQUENCE [LARGE SCALE GENOMIC DNA]</scope>
    <source>
        <strain>cv. Nipponbare</strain>
    </source>
</reference>
<reference key="3">
    <citation type="journal article" date="2008" name="Nucleic Acids Res.">
        <title>The rice annotation project database (RAP-DB): 2008 update.</title>
        <authorList>
            <consortium name="The rice annotation project (RAP)"/>
        </authorList>
    </citation>
    <scope>GENOME REANNOTATION</scope>
    <source>
        <strain>cv. Nipponbare</strain>
    </source>
</reference>
<reference key="4">
    <citation type="journal article" date="2013" name="Rice">
        <title>Improvement of the Oryza sativa Nipponbare reference genome using next generation sequence and optical map data.</title>
        <authorList>
            <person name="Kawahara Y."/>
            <person name="de la Bastide M."/>
            <person name="Hamilton J.P."/>
            <person name="Kanamori H."/>
            <person name="McCombie W.R."/>
            <person name="Ouyang S."/>
            <person name="Schwartz D.C."/>
            <person name="Tanaka T."/>
            <person name="Wu J."/>
            <person name="Zhou S."/>
            <person name="Childs K.L."/>
            <person name="Davidson R.M."/>
            <person name="Lin H."/>
            <person name="Quesada-Ocampo L."/>
            <person name="Vaillancourt B."/>
            <person name="Sakai H."/>
            <person name="Lee S.S."/>
            <person name="Kim J."/>
            <person name="Numa H."/>
            <person name="Itoh T."/>
            <person name="Buell C.R."/>
            <person name="Matsumoto T."/>
        </authorList>
    </citation>
    <scope>GENOME REANNOTATION</scope>
    <source>
        <strain>cv. Nipponbare</strain>
    </source>
</reference>
<reference key="5">
    <citation type="journal article" date="2005" name="PLoS Biol.">
        <title>The genomes of Oryza sativa: a history of duplications.</title>
        <authorList>
            <person name="Yu J."/>
            <person name="Wang J."/>
            <person name="Lin W."/>
            <person name="Li S."/>
            <person name="Li H."/>
            <person name="Zhou J."/>
            <person name="Ni P."/>
            <person name="Dong W."/>
            <person name="Hu S."/>
            <person name="Zeng C."/>
            <person name="Zhang J."/>
            <person name="Zhang Y."/>
            <person name="Li R."/>
            <person name="Xu Z."/>
            <person name="Li S."/>
            <person name="Li X."/>
            <person name="Zheng H."/>
            <person name="Cong L."/>
            <person name="Lin L."/>
            <person name="Yin J."/>
            <person name="Geng J."/>
            <person name="Li G."/>
            <person name="Shi J."/>
            <person name="Liu J."/>
            <person name="Lv H."/>
            <person name="Li J."/>
            <person name="Wang J."/>
            <person name="Deng Y."/>
            <person name="Ran L."/>
            <person name="Shi X."/>
            <person name="Wang X."/>
            <person name="Wu Q."/>
            <person name="Li C."/>
            <person name="Ren X."/>
            <person name="Wang J."/>
            <person name="Wang X."/>
            <person name="Li D."/>
            <person name="Liu D."/>
            <person name="Zhang X."/>
            <person name="Ji Z."/>
            <person name="Zhao W."/>
            <person name="Sun Y."/>
            <person name="Zhang Z."/>
            <person name="Bao J."/>
            <person name="Han Y."/>
            <person name="Dong L."/>
            <person name="Ji J."/>
            <person name="Chen P."/>
            <person name="Wu S."/>
            <person name="Liu J."/>
            <person name="Xiao Y."/>
            <person name="Bu D."/>
            <person name="Tan J."/>
            <person name="Yang L."/>
            <person name="Ye C."/>
            <person name="Zhang J."/>
            <person name="Xu J."/>
            <person name="Zhou Y."/>
            <person name="Yu Y."/>
            <person name="Zhang B."/>
            <person name="Zhuang S."/>
            <person name="Wei H."/>
            <person name="Liu B."/>
            <person name="Lei M."/>
            <person name="Yu H."/>
            <person name="Li Y."/>
            <person name="Xu H."/>
            <person name="Wei S."/>
            <person name="He X."/>
            <person name="Fang L."/>
            <person name="Zhang Z."/>
            <person name="Zhang Y."/>
            <person name="Huang X."/>
            <person name="Su Z."/>
            <person name="Tong W."/>
            <person name="Li J."/>
            <person name="Tong Z."/>
            <person name="Li S."/>
            <person name="Ye J."/>
            <person name="Wang L."/>
            <person name="Fang L."/>
            <person name="Lei T."/>
            <person name="Chen C.-S."/>
            <person name="Chen H.-C."/>
            <person name="Xu Z."/>
            <person name="Li H."/>
            <person name="Huang H."/>
            <person name="Zhang F."/>
            <person name="Xu H."/>
            <person name="Li N."/>
            <person name="Zhao C."/>
            <person name="Li S."/>
            <person name="Dong L."/>
            <person name="Huang Y."/>
            <person name="Li L."/>
            <person name="Xi Y."/>
            <person name="Qi Q."/>
            <person name="Li W."/>
            <person name="Zhang B."/>
            <person name="Hu W."/>
            <person name="Zhang Y."/>
            <person name="Tian X."/>
            <person name="Jiao Y."/>
            <person name="Liang X."/>
            <person name="Jin J."/>
            <person name="Gao L."/>
            <person name="Zheng W."/>
            <person name="Hao B."/>
            <person name="Liu S.-M."/>
            <person name="Wang W."/>
            <person name="Yuan L."/>
            <person name="Cao M."/>
            <person name="McDermott J."/>
            <person name="Samudrala R."/>
            <person name="Wang J."/>
            <person name="Wong G.K.-S."/>
            <person name="Yang H."/>
        </authorList>
    </citation>
    <scope>NUCLEOTIDE SEQUENCE [LARGE SCALE GENOMIC DNA]</scope>
    <source>
        <strain>cv. Nipponbare</strain>
    </source>
</reference>
<reference key="6">
    <citation type="submission" date="2006-10" db="EMBL/GenBank/DDBJ databases">
        <title>Oryza sativa full length cDNA.</title>
        <authorList>
            <consortium name="The rice full-length cDNA consortium"/>
        </authorList>
    </citation>
    <scope>NUCLEOTIDE SEQUENCE [LARGE SCALE MRNA]</scope>
    <source>
        <strain>cv. Nipponbare</strain>
    </source>
</reference>
<reference key="7">
    <citation type="journal article" date="2009" name="J. Genet. Genomics">
        <title>Molecular evolution and functional divergence of HAK potassium transporter gene family in rice (Oryza sativa L.).</title>
        <authorList>
            <person name="Yang Z."/>
            <person name="Gao Q."/>
            <person name="Sun C."/>
            <person name="Li W."/>
            <person name="Gu S."/>
            <person name="Xu C."/>
        </authorList>
    </citation>
    <scope>GENE FAMILY</scope>
</reference>
<reference key="8">
    <citation type="journal article" date="2011" name="J. Biosci. Bioeng.">
        <title>Rice sodium-insensitive potassium transporter, OsHAK5, confers increased salt tolerance in tobacco BY2 cells.</title>
        <authorList>
            <person name="Horie T."/>
            <person name="Sugawara M."/>
            <person name="Okada T."/>
            <person name="Taira K."/>
            <person name="Kaothien-Nakayama P."/>
            <person name="Katsuhara M."/>
            <person name="Shinmyo A."/>
            <person name="Nakayama H."/>
        </authorList>
    </citation>
    <scope>FUNCTION</scope>
    <scope>TRANSPORTER ACTIVITY</scope>
    <scope>SUBCELLULAR LOCATION</scope>
    <scope>INDUCTION</scope>
</reference>
<reference key="9">
    <citation type="journal article" date="2014" name="Plant Physiol.">
        <title>The role of a potassium transporter OsHAK5 in potassium acquisition and transport from roots to shoots in rice at low potassium supply levels.</title>
        <authorList>
            <person name="Yang T."/>
            <person name="Zhang S."/>
            <person name="Hu Y."/>
            <person name="Wu F."/>
            <person name="Hu Q."/>
            <person name="Chen G."/>
            <person name="Cai J."/>
            <person name="Wu T."/>
            <person name="Moran N."/>
            <person name="Yu L."/>
            <person name="Xu G."/>
        </authorList>
    </citation>
    <scope>FUNCTION</scope>
    <scope>TRANSPORTER ACTIVITY</scope>
    <scope>TISSUE SPECIFICITY</scope>
    <scope>INDUCTION</scope>
    <scope>DISRUPTION PHENOTYPE</scope>
</reference>
<reference key="10">
    <citation type="journal article" date="2022" name="Mol. Plant Pathol.">
        <title>Overexpression of OsHAK5 potassium transporter enhances virus resistance in rice (Oryza sativa).</title>
        <authorList>
            <person name="Jing X."/>
            <person name="Song X."/>
            <person name="Cai S."/>
            <person name="Wang P."/>
            <person name="Lu G."/>
            <person name="Yu L."/>
            <person name="Zhang C."/>
            <person name="Wu Z."/>
        </authorList>
    </citation>
    <scope>FUNCTION</scope>
    <scope>TISSUE SPECIFICITY</scope>
    <scope>INDUCTION</scope>
    <scope>DISRUPTION PHENOTYPE</scope>
</reference>
<protein>
    <recommendedName>
        <fullName>Potassium transporter 5</fullName>
    </recommendedName>
    <alternativeName>
        <fullName>OsHAK5</fullName>
    </alternativeName>
</protein>
<sequence length="781" mass="87075">MTEPLHTSSNGGAERGPNAAFESEKTLQTTTRLQRFDSLHMEAGKIPGGQSHTAKVGWATTLHLAFQSIGVVYGDMGTSPLYVFSSTFTNGIKDTNDILGVMSLIIYTVVLLPLIKYCFIVLRANDNGDGGTFALYSLISRYARISLIPNQQAEDAMVSHYKLESPSNRVKRAHWIKEKMENSPNFKIILFLVTILATSMVIGDGVLTPCISVLSAVGGIKESAKSLTQGQIAGIAIAILIVLFLVQRFGTDKVGYSFGPIILTWFIFIAGTGVYNLFKHDTGVLKAFNPKYIVDYFERNGKQGWISLGGVILCITGTEAMFADLGHFNVRAIQIGFSVVLLPSVLLAYIGQAAYLRIYPEHVADTFYKSIPDPLYWPTFVVAVAAAIIASQAMISGAFAIIAQSQILGCFPRVRVIHTSTKFHGQVYIPEINYVLMVLCVAVTAIFQTTDKIGNAYGIAVVFVMFITTLLVTLVMVMIWKTSLLWIALFPVIFGGAELIYLSSAFYKFTQGGYLPLVFSAILMFIMATWHYVHVHRYKYELRNKVSNNYVAELAVKQNLARLPGIGFLYSELVQGIPPILPHLVEKVPSIHSVLVIISIKYLPISKIETKERFLFRYVEPKEYRVFRCVVRYGYNDKVEDPAEFESLVIENLKQFIHEESLYSQSSHSLEGESIKEIGGVTDPTSEVQDAMSSRNNSDQHTTEPRNGCMDEIQSIHKEMGNGVVHLLGETNVVAEPNADFLKKIIVDYVYNFIRKNFRQPEKITCVPHNRLLRVGMTYEI</sequence>
<feature type="chain" id="PRO_0000379531" description="Potassium transporter 5">
    <location>
        <begin position="1"/>
        <end position="781"/>
    </location>
</feature>
<feature type="topological domain" description="Cytoplasmic" evidence="1">
    <location>
        <begin position="1"/>
        <end position="63"/>
    </location>
</feature>
<feature type="transmembrane region" description="Helical; Name=1" evidence="1">
    <location>
        <begin position="64"/>
        <end position="84"/>
    </location>
</feature>
<feature type="topological domain" description="Extracellular" evidence="1">
    <location>
        <begin position="85"/>
        <end position="100"/>
    </location>
</feature>
<feature type="transmembrane region" description="Helical; Name=2" evidence="1">
    <location>
        <begin position="101"/>
        <end position="121"/>
    </location>
</feature>
<feature type="topological domain" description="Cytoplasmic" evidence="1">
    <location>
        <begin position="122"/>
        <end position="187"/>
    </location>
</feature>
<feature type="transmembrane region" description="Helical; Name=3" evidence="1">
    <location>
        <begin position="188"/>
        <end position="208"/>
    </location>
</feature>
<feature type="topological domain" description="Extracellular" evidence="1">
    <location>
        <begin position="209"/>
        <end position="225"/>
    </location>
</feature>
<feature type="transmembrane region" description="Helical; Name=4" evidence="1">
    <location>
        <begin position="226"/>
        <end position="246"/>
    </location>
</feature>
<feature type="topological domain" description="Cytoplasmic" evidence="1">
    <location>
        <begin position="247"/>
        <end position="257"/>
    </location>
</feature>
<feature type="transmembrane region" description="Helical; Name=5" evidence="1">
    <location>
        <begin position="258"/>
        <end position="278"/>
    </location>
</feature>
<feature type="topological domain" description="Extracellular" evidence="1">
    <location>
        <begin position="279"/>
        <end position="304"/>
    </location>
</feature>
<feature type="transmembrane region" description="Helical; Name=6" evidence="1">
    <location>
        <begin position="305"/>
        <end position="325"/>
    </location>
</feature>
<feature type="topological domain" description="Cytoplasmic" evidence="1">
    <location>
        <begin position="326"/>
        <end position="334"/>
    </location>
</feature>
<feature type="transmembrane region" description="Helical; Name=7" evidence="1">
    <location>
        <begin position="335"/>
        <end position="355"/>
    </location>
</feature>
<feature type="topological domain" description="Extracellular" evidence="1">
    <location>
        <begin position="356"/>
        <end position="381"/>
    </location>
</feature>
<feature type="transmembrane region" description="Helical; Name=8" evidence="1">
    <location>
        <begin position="382"/>
        <end position="402"/>
    </location>
</feature>
<feature type="topological domain" description="Cytoplasmic" evidence="1">
    <location>
        <begin position="403"/>
        <end position="426"/>
    </location>
</feature>
<feature type="transmembrane region" description="Helical; Name=9" evidence="1">
    <location>
        <begin position="427"/>
        <end position="447"/>
    </location>
</feature>
<feature type="topological domain" description="Extracellular" evidence="1">
    <location>
        <begin position="448"/>
        <end position="458"/>
    </location>
</feature>
<feature type="transmembrane region" description="Helical; Name=10" evidence="1">
    <location>
        <begin position="459"/>
        <end position="479"/>
    </location>
</feature>
<feature type="topological domain" description="Cytoplasmic" evidence="1">
    <location>
        <begin position="480"/>
        <end position="481"/>
    </location>
</feature>
<feature type="transmembrane region" description="Helical; Name=11" evidence="1">
    <location>
        <begin position="482"/>
        <end position="502"/>
    </location>
</feature>
<feature type="topological domain" description="Extracellular" evidence="1">
    <location>
        <begin position="503"/>
        <end position="512"/>
    </location>
</feature>
<feature type="transmembrane region" description="Helical; Name=12" evidence="1">
    <location>
        <begin position="513"/>
        <end position="533"/>
    </location>
</feature>
<feature type="topological domain" description="Cytoplasmic" evidence="1">
    <location>
        <begin position="534"/>
        <end position="781"/>
    </location>
</feature>
<feature type="region of interest" description="Disordered" evidence="2">
    <location>
        <begin position="1"/>
        <end position="24"/>
    </location>
</feature>
<feature type="region of interest" description="Disordered" evidence="2">
    <location>
        <begin position="681"/>
        <end position="707"/>
    </location>
</feature>
<feature type="compositionally biased region" description="Polar residues" evidence="2">
    <location>
        <begin position="1"/>
        <end position="11"/>
    </location>
</feature>
<feature type="compositionally biased region" description="Polar residues" evidence="2">
    <location>
        <begin position="683"/>
        <end position="700"/>
    </location>
</feature>
<dbReference type="EMBL" id="AP003272">
    <property type="protein sequence ID" value="BAD87321.1"/>
    <property type="status" value="ALT_SEQ"/>
    <property type="molecule type" value="Genomic_DNA"/>
</dbReference>
<dbReference type="EMBL" id="AP004330">
    <property type="protein sequence ID" value="BAD88177.1"/>
    <property type="status" value="ALT_SEQ"/>
    <property type="molecule type" value="Genomic_DNA"/>
</dbReference>
<dbReference type="EMBL" id="AP008207">
    <property type="protein sequence ID" value="BAF07202.2"/>
    <property type="status" value="ALT_SEQ"/>
    <property type="molecule type" value="Genomic_DNA"/>
</dbReference>
<dbReference type="EMBL" id="AP014957">
    <property type="protein sequence ID" value="BAS76032.1"/>
    <property type="molecule type" value="Genomic_DNA"/>
</dbReference>
<dbReference type="EMBL" id="CM000138">
    <property type="protein sequence ID" value="EAZ14719.1"/>
    <property type="status" value="ALT_SEQ"/>
    <property type="molecule type" value="Genomic_DNA"/>
</dbReference>
<dbReference type="EMBL" id="AK241580">
    <property type="status" value="NOT_ANNOTATED_CDS"/>
    <property type="molecule type" value="mRNA"/>
</dbReference>
<dbReference type="RefSeq" id="XP_015622303.1">
    <property type="nucleotide sequence ID" value="XM_015766817.1"/>
</dbReference>
<dbReference type="FunCoup" id="Q5JK32">
    <property type="interactions" value="26"/>
</dbReference>
<dbReference type="STRING" id="39947.Q5JK32"/>
<dbReference type="PaxDb" id="39947-Q5JK32"/>
<dbReference type="EnsemblPlants" id="Os01t0930400-01">
    <property type="protein sequence ID" value="Os01t0930400-01"/>
    <property type="gene ID" value="Os01g0930400"/>
</dbReference>
<dbReference type="Gramene" id="Os01t0930400-01">
    <property type="protein sequence ID" value="Os01t0930400-01"/>
    <property type="gene ID" value="Os01g0930400"/>
</dbReference>
<dbReference type="KEGG" id="dosa:Os01g0930400"/>
<dbReference type="eggNOG" id="ENOG502QPSA">
    <property type="taxonomic scope" value="Eukaryota"/>
</dbReference>
<dbReference type="HOGENOM" id="CLU_008142_2_0_1"/>
<dbReference type="InParanoid" id="Q5JK32"/>
<dbReference type="OMA" id="MAIMGIW"/>
<dbReference type="OrthoDB" id="504708at2759"/>
<dbReference type="Proteomes" id="UP000000763">
    <property type="component" value="Chromosome 1"/>
</dbReference>
<dbReference type="Proteomes" id="UP000007752">
    <property type="component" value="Chromosome 1"/>
</dbReference>
<dbReference type="Proteomes" id="UP000059680">
    <property type="component" value="Chromosome 1"/>
</dbReference>
<dbReference type="GO" id="GO:0016020">
    <property type="term" value="C:membrane"/>
    <property type="evidence" value="ECO:0000318"/>
    <property type="project" value="GO_Central"/>
</dbReference>
<dbReference type="GO" id="GO:0005886">
    <property type="term" value="C:plasma membrane"/>
    <property type="evidence" value="ECO:0000314"/>
    <property type="project" value="UniProtKB"/>
</dbReference>
<dbReference type="GO" id="GO:0015079">
    <property type="term" value="F:potassium ion transmembrane transporter activity"/>
    <property type="evidence" value="ECO:0000314"/>
    <property type="project" value="UniProtKB"/>
</dbReference>
<dbReference type="GO" id="GO:1901002">
    <property type="term" value="P:positive regulation of response to salt stress"/>
    <property type="evidence" value="ECO:0000314"/>
    <property type="project" value="UniProtKB"/>
</dbReference>
<dbReference type="GO" id="GO:0006813">
    <property type="term" value="P:potassium ion transport"/>
    <property type="evidence" value="ECO:0000318"/>
    <property type="project" value="GO_Central"/>
</dbReference>
<dbReference type="InterPro" id="IPR003855">
    <property type="entry name" value="K+_transporter"/>
</dbReference>
<dbReference type="InterPro" id="IPR053952">
    <property type="entry name" value="K_trans_C"/>
</dbReference>
<dbReference type="InterPro" id="IPR053951">
    <property type="entry name" value="K_trans_N"/>
</dbReference>
<dbReference type="NCBIfam" id="TIGR00794">
    <property type="entry name" value="kup"/>
    <property type="match status" value="1"/>
</dbReference>
<dbReference type="PANTHER" id="PTHR30540">
    <property type="entry name" value="OSMOTIC STRESS POTASSIUM TRANSPORTER"/>
    <property type="match status" value="1"/>
</dbReference>
<dbReference type="PANTHER" id="PTHR30540:SF94">
    <property type="entry name" value="POTASSIUM TRANSPORTER 5"/>
    <property type="match status" value="1"/>
</dbReference>
<dbReference type="Pfam" id="PF02705">
    <property type="entry name" value="K_trans"/>
    <property type="match status" value="1"/>
</dbReference>
<dbReference type="Pfam" id="PF22776">
    <property type="entry name" value="K_trans_C"/>
    <property type="match status" value="1"/>
</dbReference>
<organism>
    <name type="scientific">Oryza sativa subsp. japonica</name>
    <name type="common">Rice</name>
    <dbReference type="NCBI Taxonomy" id="39947"/>
    <lineage>
        <taxon>Eukaryota</taxon>
        <taxon>Viridiplantae</taxon>
        <taxon>Streptophyta</taxon>
        <taxon>Embryophyta</taxon>
        <taxon>Tracheophyta</taxon>
        <taxon>Spermatophyta</taxon>
        <taxon>Magnoliopsida</taxon>
        <taxon>Liliopsida</taxon>
        <taxon>Poales</taxon>
        <taxon>Poaceae</taxon>
        <taxon>BOP clade</taxon>
        <taxon>Oryzoideae</taxon>
        <taxon>Oryzeae</taxon>
        <taxon>Oryzinae</taxon>
        <taxon>Oryza</taxon>
        <taxon>Oryza sativa</taxon>
    </lineage>
</organism>
<accession>Q5JK32</accession>
<accession>A0A0P0VCA8</accession>
<accession>Q0JGC6</accession>
<gene>
    <name type="primary">HAK5</name>
    <name type="ordered locus">Os01g0930400</name>
    <name type="ordered locus">LOC_Os01g70490</name>
    <name type="ORF">OsJ_04644</name>
    <name type="ORF">OSJNBa0052O12.31</name>
    <name type="ORF">P0506E04.9</name>
</gene>
<evidence type="ECO:0000255" key="1"/>
<evidence type="ECO:0000256" key="2">
    <source>
        <dbReference type="SAM" id="MobiDB-lite"/>
    </source>
</evidence>
<evidence type="ECO:0000269" key="3">
    <source>
    </source>
</evidence>
<evidence type="ECO:0000269" key="4">
    <source>
    </source>
</evidence>
<evidence type="ECO:0000269" key="5">
    <source>
    </source>
</evidence>
<evidence type="ECO:0000305" key="6"/>
<comment type="function">
    <text evidence="3 4 5">High-affinity potassium transporter (PubMed:21084222, PubMed:25157029). Its potassium transporter activity does not seem to be affected by high sodium and low potassium concentrations in the extracellular environment (PubMed:21084222). Invloved in salt stress tolerance by enhancing root potassium uptake and translocation to the shoot to prevent sodium influx during salt stress (PubMed:21084222, PubMed:25157029). Involved in the positive regulation of disease resistance against the rice grassy stunt virus by promoting potassium transport and increasing endogenous plant potassium (PubMed:35344250).</text>
</comment>
<comment type="catalytic activity">
    <reaction evidence="3 4">
        <text>K(+)(in) = K(+)(out)</text>
        <dbReference type="Rhea" id="RHEA:29463"/>
        <dbReference type="ChEBI" id="CHEBI:29103"/>
    </reaction>
</comment>
<comment type="subcellular location">
    <subcellularLocation>
        <location evidence="3">Cell membrane</location>
        <topology evidence="1">Multi-pass membrane protein</topology>
    </subcellularLocation>
</comment>
<comment type="tissue specificity">
    <text evidence="4 5">Expressed in root epidermis, parenchyma of stele tissue and primordial of the lateral root, root-shoot junctions and leaf sheaths (PubMed:25157029). Expressed in germinated embryonic tissue, young tillers, flower organs and pedicels (PubMed:35344250).</text>
</comment>
<comment type="induction">
    <text evidence="3 4 5">Induced by potassium starvation (PubMed:21084222, PubMed:25157029). Induced by salt stress (PubMed:25157029). Induced by infection with the rice grassy stunt virus (PubMed:35344250).</text>
</comment>
<comment type="disruption phenotype">
    <text evidence="4 5">Reduced biomass of roots, basal nodes, leaf sheaths and leaf blades (PubMed:25157029). Reduced tillering number and reduced plant height (PubMed:35344250). Increased susceptibility to infection by the rice grassy stunt virus (PubMed:35344250).</text>
</comment>
<comment type="similarity">
    <text evidence="6">Belongs to the HAK/KUP transporter (TC 2.A.72.3) family.</text>
</comment>
<comment type="sequence caution" evidence="6">
    <conflict type="erroneous gene model prediction">
        <sequence resource="EMBL-CDS" id="BAD87321"/>
    </conflict>
</comment>
<comment type="sequence caution" evidence="6">
    <conflict type="erroneous gene model prediction">
        <sequence resource="EMBL-CDS" id="BAD88177"/>
    </conflict>
</comment>
<comment type="sequence caution" evidence="6">
    <conflict type="erroneous gene model prediction">
        <sequence resource="EMBL-CDS" id="BAF07202"/>
    </conflict>
</comment>
<comment type="sequence caution" evidence="6">
    <conflict type="erroneous gene model prediction">
        <sequence resource="EMBL-CDS" id="EAZ14719"/>
    </conflict>
</comment>
<keyword id="KW-1003">Cell membrane</keyword>
<keyword id="KW-0406">Ion transport</keyword>
<keyword id="KW-0472">Membrane</keyword>
<keyword id="KW-0630">Potassium</keyword>
<keyword id="KW-0633">Potassium transport</keyword>
<keyword id="KW-1185">Reference proteome</keyword>
<keyword id="KW-0346">Stress response</keyword>
<keyword id="KW-0812">Transmembrane</keyword>
<keyword id="KW-1133">Transmembrane helix</keyword>
<keyword id="KW-0813">Transport</keyword>
<proteinExistence type="evidence at transcript level"/>
<name>HAK5_ORYSJ</name>